<reference key="1">
    <citation type="journal article" date="2004" name="Nat. Genet.">
        <title>Evidence in the Legionella pneumophila genome for exploitation of host cell functions and high genome plasticity.</title>
        <authorList>
            <person name="Cazalet C."/>
            <person name="Rusniok C."/>
            <person name="Brueggemann H."/>
            <person name="Zidane N."/>
            <person name="Magnier A."/>
            <person name="Ma L."/>
            <person name="Tichit M."/>
            <person name="Jarraud S."/>
            <person name="Bouchier C."/>
            <person name="Vandenesch F."/>
            <person name="Kunst F."/>
            <person name="Etienne J."/>
            <person name="Glaser P."/>
            <person name="Buchrieser C."/>
        </authorList>
    </citation>
    <scope>NUCLEOTIDE SEQUENCE [LARGE SCALE GENOMIC DNA]</scope>
    <source>
        <strain>Paris</strain>
    </source>
</reference>
<gene>
    <name evidence="1" type="primary">pdxJ</name>
    <name type="ordered locus">lpp1008</name>
</gene>
<dbReference type="EC" id="2.6.99.2" evidence="1"/>
<dbReference type="EMBL" id="CR628336">
    <property type="protein sequence ID" value="CAH12159.1"/>
    <property type="molecule type" value="Genomic_DNA"/>
</dbReference>
<dbReference type="RefSeq" id="WP_011213371.1">
    <property type="nucleotide sequence ID" value="NC_006368.1"/>
</dbReference>
<dbReference type="SMR" id="Q3V7G1"/>
<dbReference type="KEGG" id="lpp:lpp1008"/>
<dbReference type="LegioList" id="lpp1008"/>
<dbReference type="HOGENOM" id="CLU_074563_0_0_6"/>
<dbReference type="UniPathway" id="UPA00244">
    <property type="reaction ID" value="UER00313"/>
</dbReference>
<dbReference type="GO" id="GO:0005829">
    <property type="term" value="C:cytosol"/>
    <property type="evidence" value="ECO:0007669"/>
    <property type="project" value="TreeGrafter"/>
</dbReference>
<dbReference type="GO" id="GO:0033856">
    <property type="term" value="F:pyridoxine 5'-phosphate synthase activity"/>
    <property type="evidence" value="ECO:0007669"/>
    <property type="project" value="UniProtKB-EC"/>
</dbReference>
<dbReference type="GO" id="GO:0008615">
    <property type="term" value="P:pyridoxine biosynthetic process"/>
    <property type="evidence" value="ECO:0007669"/>
    <property type="project" value="UniProtKB-UniRule"/>
</dbReference>
<dbReference type="CDD" id="cd00003">
    <property type="entry name" value="PNPsynthase"/>
    <property type="match status" value="1"/>
</dbReference>
<dbReference type="FunFam" id="3.20.20.70:FF:000042">
    <property type="entry name" value="Pyridoxine 5'-phosphate synthase"/>
    <property type="match status" value="1"/>
</dbReference>
<dbReference type="Gene3D" id="3.20.20.70">
    <property type="entry name" value="Aldolase class I"/>
    <property type="match status" value="1"/>
</dbReference>
<dbReference type="HAMAP" id="MF_00279">
    <property type="entry name" value="PdxJ"/>
    <property type="match status" value="1"/>
</dbReference>
<dbReference type="InterPro" id="IPR013785">
    <property type="entry name" value="Aldolase_TIM"/>
</dbReference>
<dbReference type="InterPro" id="IPR004569">
    <property type="entry name" value="PyrdxlP_synth_PdxJ"/>
</dbReference>
<dbReference type="InterPro" id="IPR036130">
    <property type="entry name" value="Pyridoxine-5'_phos_synth"/>
</dbReference>
<dbReference type="NCBIfam" id="TIGR00559">
    <property type="entry name" value="pdxJ"/>
    <property type="match status" value="1"/>
</dbReference>
<dbReference type="NCBIfam" id="NF003623">
    <property type="entry name" value="PRK05265.1-1"/>
    <property type="match status" value="1"/>
</dbReference>
<dbReference type="NCBIfam" id="NF003625">
    <property type="entry name" value="PRK05265.1-3"/>
    <property type="match status" value="1"/>
</dbReference>
<dbReference type="NCBIfam" id="NF003627">
    <property type="entry name" value="PRK05265.1-5"/>
    <property type="match status" value="1"/>
</dbReference>
<dbReference type="PANTHER" id="PTHR30456">
    <property type="entry name" value="PYRIDOXINE 5'-PHOSPHATE SYNTHASE"/>
    <property type="match status" value="1"/>
</dbReference>
<dbReference type="PANTHER" id="PTHR30456:SF0">
    <property type="entry name" value="PYRIDOXINE 5'-PHOSPHATE SYNTHASE"/>
    <property type="match status" value="1"/>
</dbReference>
<dbReference type="Pfam" id="PF03740">
    <property type="entry name" value="PdxJ"/>
    <property type="match status" value="1"/>
</dbReference>
<dbReference type="SUPFAM" id="SSF63892">
    <property type="entry name" value="Pyridoxine 5'-phosphate synthase"/>
    <property type="match status" value="1"/>
</dbReference>
<accession>Q3V7G1</accession>
<protein>
    <recommendedName>
        <fullName evidence="1">Pyridoxine 5'-phosphate synthase</fullName>
        <shortName evidence="1">PNP synthase</shortName>
        <ecNumber evidence="1">2.6.99.2</ecNumber>
    </recommendedName>
</protein>
<evidence type="ECO:0000255" key="1">
    <source>
        <dbReference type="HAMAP-Rule" id="MF_00279"/>
    </source>
</evidence>
<name>PDXJ_LEGPA</name>
<organism>
    <name type="scientific">Legionella pneumophila (strain Paris)</name>
    <dbReference type="NCBI Taxonomy" id="297246"/>
    <lineage>
        <taxon>Bacteria</taxon>
        <taxon>Pseudomonadati</taxon>
        <taxon>Pseudomonadota</taxon>
        <taxon>Gammaproteobacteria</taxon>
        <taxon>Legionellales</taxon>
        <taxon>Legionellaceae</taxon>
        <taxon>Legionella</taxon>
    </lineage>
</organism>
<comment type="function">
    <text evidence="1">Catalyzes the complicated ring closure reaction between the two acyclic compounds 1-deoxy-D-xylulose-5-phosphate (DXP) and 3-amino-2-oxopropyl phosphate (1-amino-acetone-3-phosphate or AAP) to form pyridoxine 5'-phosphate (PNP) and inorganic phosphate.</text>
</comment>
<comment type="catalytic activity">
    <reaction evidence="1">
        <text>3-amino-2-oxopropyl phosphate + 1-deoxy-D-xylulose 5-phosphate = pyridoxine 5'-phosphate + phosphate + 2 H2O + H(+)</text>
        <dbReference type="Rhea" id="RHEA:15265"/>
        <dbReference type="ChEBI" id="CHEBI:15377"/>
        <dbReference type="ChEBI" id="CHEBI:15378"/>
        <dbReference type="ChEBI" id="CHEBI:43474"/>
        <dbReference type="ChEBI" id="CHEBI:57279"/>
        <dbReference type="ChEBI" id="CHEBI:57792"/>
        <dbReference type="ChEBI" id="CHEBI:58589"/>
        <dbReference type="EC" id="2.6.99.2"/>
    </reaction>
</comment>
<comment type="pathway">
    <text evidence="1">Cofactor biosynthesis; pyridoxine 5'-phosphate biosynthesis; pyridoxine 5'-phosphate from D-erythrose 4-phosphate: step 5/5.</text>
</comment>
<comment type="subunit">
    <text evidence="1">Homooctamer; tetramer of dimers.</text>
</comment>
<comment type="subcellular location">
    <subcellularLocation>
        <location evidence="1">Cytoplasm</location>
    </subcellularLocation>
</comment>
<comment type="similarity">
    <text evidence="1">Belongs to the PNP synthase family.</text>
</comment>
<feature type="chain" id="PRO_0000231815" description="Pyridoxine 5'-phosphate synthase">
    <location>
        <begin position="1"/>
        <end position="248"/>
    </location>
</feature>
<feature type="active site" description="Proton acceptor" evidence="1">
    <location>
        <position position="46"/>
    </location>
</feature>
<feature type="active site" description="Proton acceptor" evidence="1">
    <location>
        <position position="73"/>
    </location>
</feature>
<feature type="active site" description="Proton donor" evidence="1">
    <location>
        <position position="194"/>
    </location>
</feature>
<feature type="binding site" evidence="1">
    <location>
        <position position="10"/>
    </location>
    <ligand>
        <name>3-amino-2-oxopropyl phosphate</name>
        <dbReference type="ChEBI" id="CHEBI:57279"/>
    </ligand>
</feature>
<feature type="binding site" evidence="1">
    <location>
        <begin position="12"/>
        <end position="13"/>
    </location>
    <ligand>
        <name>1-deoxy-D-xylulose 5-phosphate</name>
        <dbReference type="ChEBI" id="CHEBI:57792"/>
    </ligand>
</feature>
<feature type="binding site" evidence="1">
    <location>
        <position position="21"/>
    </location>
    <ligand>
        <name>3-amino-2-oxopropyl phosphate</name>
        <dbReference type="ChEBI" id="CHEBI:57279"/>
    </ligand>
</feature>
<feature type="binding site" evidence="1">
    <location>
        <position position="48"/>
    </location>
    <ligand>
        <name>1-deoxy-D-xylulose 5-phosphate</name>
        <dbReference type="ChEBI" id="CHEBI:57792"/>
    </ligand>
</feature>
<feature type="binding site" evidence="1">
    <location>
        <position position="53"/>
    </location>
    <ligand>
        <name>1-deoxy-D-xylulose 5-phosphate</name>
        <dbReference type="ChEBI" id="CHEBI:57792"/>
    </ligand>
</feature>
<feature type="binding site" evidence="1">
    <location>
        <position position="103"/>
    </location>
    <ligand>
        <name>1-deoxy-D-xylulose 5-phosphate</name>
        <dbReference type="ChEBI" id="CHEBI:57792"/>
    </ligand>
</feature>
<feature type="binding site" evidence="1">
    <location>
        <position position="195"/>
    </location>
    <ligand>
        <name>3-amino-2-oxopropyl phosphate</name>
        <dbReference type="ChEBI" id="CHEBI:57279"/>
    </ligand>
</feature>
<feature type="binding site" evidence="1">
    <location>
        <begin position="216"/>
        <end position="217"/>
    </location>
    <ligand>
        <name>3-amino-2-oxopropyl phosphate</name>
        <dbReference type="ChEBI" id="CHEBI:57279"/>
    </ligand>
</feature>
<feature type="site" description="Transition state stabilizer" evidence="1">
    <location>
        <position position="154"/>
    </location>
</feature>
<keyword id="KW-0963">Cytoplasm</keyword>
<keyword id="KW-0664">Pyridoxine biosynthesis</keyword>
<keyword id="KW-0808">Transferase</keyword>
<proteinExistence type="inferred from homology"/>
<sequence length="248" mass="27883">MNKELLLGVNIDHIATIRQARGTRYPDPVQAAMDAEEAGADGITLHMREDLRHIQARDVRLIKQVLQTRMNLELAVTEAMLDFAEEILPEHACLVPEKREELTTEGGLDILTHRNVVERAVRRLQLMGSEVSLFIDPDKEQIRAAVDVGAPVIELHTGCYADATSEEKQHYELQRIKEAAEFAASLNLVVNAGHGLHYHNVKPIAAIRELNELNIGHAIIARALFCGLKEAVRHMRQLMQEARLYVND</sequence>